<feature type="chain" id="PRO_1000004157" description="Large ribosomal subunit protein bL33">
    <location>
        <begin position="1"/>
        <end position="55"/>
    </location>
</feature>
<reference key="1">
    <citation type="journal article" date="2008" name="J. Bacteriol.">
        <title>The genome sequence of the tomato-pathogenic actinomycete Clavibacter michiganensis subsp. michiganensis NCPPB382 reveals a large island involved in pathogenicity.</title>
        <authorList>
            <person name="Gartemann K.-H."/>
            <person name="Abt B."/>
            <person name="Bekel T."/>
            <person name="Burger A."/>
            <person name="Engemann J."/>
            <person name="Fluegel M."/>
            <person name="Gaigalat L."/>
            <person name="Goesmann A."/>
            <person name="Graefen I."/>
            <person name="Kalinowski J."/>
            <person name="Kaup O."/>
            <person name="Kirchner O."/>
            <person name="Krause L."/>
            <person name="Linke B."/>
            <person name="McHardy A."/>
            <person name="Meyer F."/>
            <person name="Pohle S."/>
            <person name="Rueckert C."/>
            <person name="Schneiker S."/>
            <person name="Zellermann E.-M."/>
            <person name="Puehler A."/>
            <person name="Eichenlaub R."/>
            <person name="Kaiser O."/>
            <person name="Bartels D."/>
        </authorList>
    </citation>
    <scope>NUCLEOTIDE SEQUENCE [LARGE SCALE GENOMIC DNA]</scope>
    <source>
        <strain>NCPPB 382</strain>
    </source>
</reference>
<organism>
    <name type="scientific">Clavibacter michiganensis subsp. michiganensis (strain NCPPB 382)</name>
    <dbReference type="NCBI Taxonomy" id="443906"/>
    <lineage>
        <taxon>Bacteria</taxon>
        <taxon>Bacillati</taxon>
        <taxon>Actinomycetota</taxon>
        <taxon>Actinomycetes</taxon>
        <taxon>Micrococcales</taxon>
        <taxon>Microbacteriaceae</taxon>
        <taxon>Clavibacter</taxon>
    </lineage>
</organism>
<evidence type="ECO:0000255" key="1">
    <source>
        <dbReference type="HAMAP-Rule" id="MF_00294"/>
    </source>
</evidence>
<evidence type="ECO:0000305" key="2"/>
<comment type="similarity">
    <text evidence="1">Belongs to the bacterial ribosomal protein bL33 family.</text>
</comment>
<keyword id="KW-0687">Ribonucleoprotein</keyword>
<keyword id="KW-0689">Ribosomal protein</keyword>
<gene>
    <name evidence="1" type="primary">rpmG</name>
    <name type="ordered locus">CMM_2936</name>
</gene>
<proteinExistence type="inferred from homology"/>
<dbReference type="EMBL" id="AM711867">
    <property type="protein sequence ID" value="CAN03023.1"/>
    <property type="molecule type" value="Genomic_DNA"/>
</dbReference>
<dbReference type="RefSeq" id="WP_011187086.1">
    <property type="nucleotide sequence ID" value="NC_009480.1"/>
</dbReference>
<dbReference type="SMR" id="A5CV83"/>
<dbReference type="GeneID" id="92984638"/>
<dbReference type="KEGG" id="cmi:CMM_2936"/>
<dbReference type="eggNOG" id="COG0267">
    <property type="taxonomic scope" value="Bacteria"/>
</dbReference>
<dbReference type="HOGENOM" id="CLU_190949_1_1_11"/>
<dbReference type="OrthoDB" id="21586at2"/>
<dbReference type="Proteomes" id="UP000001564">
    <property type="component" value="Chromosome"/>
</dbReference>
<dbReference type="GO" id="GO:0022625">
    <property type="term" value="C:cytosolic large ribosomal subunit"/>
    <property type="evidence" value="ECO:0007669"/>
    <property type="project" value="TreeGrafter"/>
</dbReference>
<dbReference type="GO" id="GO:0003735">
    <property type="term" value="F:structural constituent of ribosome"/>
    <property type="evidence" value="ECO:0007669"/>
    <property type="project" value="InterPro"/>
</dbReference>
<dbReference type="GO" id="GO:0006412">
    <property type="term" value="P:translation"/>
    <property type="evidence" value="ECO:0007669"/>
    <property type="project" value="UniProtKB-UniRule"/>
</dbReference>
<dbReference type="FunFam" id="2.20.28.120:FF:000002">
    <property type="entry name" value="50S ribosomal protein L33"/>
    <property type="match status" value="1"/>
</dbReference>
<dbReference type="Gene3D" id="2.20.28.120">
    <property type="entry name" value="Ribosomal protein L33"/>
    <property type="match status" value="1"/>
</dbReference>
<dbReference type="HAMAP" id="MF_00294">
    <property type="entry name" value="Ribosomal_bL33"/>
    <property type="match status" value="1"/>
</dbReference>
<dbReference type="InterPro" id="IPR001705">
    <property type="entry name" value="Ribosomal_bL33"/>
</dbReference>
<dbReference type="InterPro" id="IPR018264">
    <property type="entry name" value="Ribosomal_bL33_CS"/>
</dbReference>
<dbReference type="InterPro" id="IPR038584">
    <property type="entry name" value="Ribosomal_bL33_sf"/>
</dbReference>
<dbReference type="InterPro" id="IPR011332">
    <property type="entry name" value="Ribosomal_zn-bd"/>
</dbReference>
<dbReference type="NCBIfam" id="NF001860">
    <property type="entry name" value="PRK00595.1"/>
    <property type="match status" value="1"/>
</dbReference>
<dbReference type="NCBIfam" id="TIGR01023">
    <property type="entry name" value="rpmG_bact"/>
    <property type="match status" value="1"/>
</dbReference>
<dbReference type="PANTHER" id="PTHR15238">
    <property type="entry name" value="54S RIBOSOMAL PROTEIN L39, MITOCHONDRIAL"/>
    <property type="match status" value="1"/>
</dbReference>
<dbReference type="PANTHER" id="PTHR15238:SF1">
    <property type="entry name" value="LARGE RIBOSOMAL SUBUNIT PROTEIN BL33M"/>
    <property type="match status" value="1"/>
</dbReference>
<dbReference type="Pfam" id="PF00471">
    <property type="entry name" value="Ribosomal_L33"/>
    <property type="match status" value="1"/>
</dbReference>
<dbReference type="SUPFAM" id="SSF57829">
    <property type="entry name" value="Zn-binding ribosomal proteins"/>
    <property type="match status" value="1"/>
</dbReference>
<dbReference type="PROSITE" id="PS00582">
    <property type="entry name" value="RIBOSOMAL_L33"/>
    <property type="match status" value="1"/>
</dbReference>
<accession>A5CV83</accession>
<protein>
    <recommendedName>
        <fullName evidence="1">Large ribosomal subunit protein bL33</fullName>
    </recommendedName>
    <alternativeName>
        <fullName evidence="2">50S ribosomal protein L33</fullName>
    </alternativeName>
</protein>
<name>RL33_CLAM3</name>
<sequence>MAKQQDVRPIIKLRSTAGTGYTYVTRKNRRNNPDRLVLKKYDPVVRKHVDFREER</sequence>